<reference key="1">
    <citation type="journal article" date="2004" name="Nucleic Acids Res.">
        <title>The genome sequence of Bacillus cereus ATCC 10987 reveals metabolic adaptations and a large plasmid related to Bacillus anthracis pXO1.</title>
        <authorList>
            <person name="Rasko D.A."/>
            <person name="Ravel J."/>
            <person name="Oekstad O.A."/>
            <person name="Helgason E."/>
            <person name="Cer R.Z."/>
            <person name="Jiang L."/>
            <person name="Shores K.A."/>
            <person name="Fouts D.E."/>
            <person name="Tourasse N.J."/>
            <person name="Angiuoli S.V."/>
            <person name="Kolonay J.F."/>
            <person name="Nelson W.C."/>
            <person name="Kolstoe A.-B."/>
            <person name="Fraser C.M."/>
            <person name="Read T.D."/>
        </authorList>
    </citation>
    <scope>NUCLEOTIDE SEQUENCE [LARGE SCALE GENOMIC DNA]</scope>
    <source>
        <strain>ATCC 10987 / NRS 248</strain>
    </source>
</reference>
<keyword id="KW-0687">Ribonucleoprotein</keyword>
<keyword id="KW-0689">Ribosomal protein</keyword>
<feature type="chain" id="PRO_0000163404" description="Large ribosomal subunit protein bL19">
    <location>
        <begin position="1"/>
        <end position="114"/>
    </location>
</feature>
<sequence>MQQLIAEITKGQLKTDLPSFRPGDTLRVHVKVVEGTRERIQLFEGVVIKRRGGGISETFTVRKISYGVGVERTFPVHTPRIAKIEVLRRGKVRRAKLYYLRNLRGKKARIKEIR</sequence>
<protein>
    <recommendedName>
        <fullName evidence="1">Large ribosomal subunit protein bL19</fullName>
    </recommendedName>
    <alternativeName>
        <fullName evidence="2">50S ribosomal protein L19</fullName>
    </alternativeName>
</protein>
<comment type="function">
    <text evidence="1">This protein is located at the 30S-50S ribosomal subunit interface and may play a role in the structure and function of the aminoacyl-tRNA binding site.</text>
</comment>
<comment type="similarity">
    <text evidence="1">Belongs to the bacterial ribosomal protein bL19 family.</text>
</comment>
<name>RL19_BACC1</name>
<proteinExistence type="inferred from homology"/>
<accession>Q732N0</accession>
<gene>
    <name evidence="1" type="primary">rplS</name>
    <name type="ordered locus">BCE_3882</name>
</gene>
<organism>
    <name type="scientific">Bacillus cereus (strain ATCC 10987 / NRS 248)</name>
    <dbReference type="NCBI Taxonomy" id="222523"/>
    <lineage>
        <taxon>Bacteria</taxon>
        <taxon>Bacillati</taxon>
        <taxon>Bacillota</taxon>
        <taxon>Bacilli</taxon>
        <taxon>Bacillales</taxon>
        <taxon>Bacillaceae</taxon>
        <taxon>Bacillus</taxon>
        <taxon>Bacillus cereus group</taxon>
    </lineage>
</organism>
<evidence type="ECO:0000255" key="1">
    <source>
        <dbReference type="HAMAP-Rule" id="MF_00402"/>
    </source>
</evidence>
<evidence type="ECO:0000305" key="2"/>
<dbReference type="EMBL" id="AE017194">
    <property type="protein sequence ID" value="AAS42787.1"/>
    <property type="molecule type" value="Genomic_DNA"/>
</dbReference>
<dbReference type="SMR" id="Q732N0"/>
<dbReference type="KEGG" id="bca:BCE_3882"/>
<dbReference type="HOGENOM" id="CLU_103507_2_1_9"/>
<dbReference type="Proteomes" id="UP000002527">
    <property type="component" value="Chromosome"/>
</dbReference>
<dbReference type="GO" id="GO:0022625">
    <property type="term" value="C:cytosolic large ribosomal subunit"/>
    <property type="evidence" value="ECO:0007669"/>
    <property type="project" value="TreeGrafter"/>
</dbReference>
<dbReference type="GO" id="GO:0003735">
    <property type="term" value="F:structural constituent of ribosome"/>
    <property type="evidence" value="ECO:0007669"/>
    <property type="project" value="InterPro"/>
</dbReference>
<dbReference type="GO" id="GO:0006412">
    <property type="term" value="P:translation"/>
    <property type="evidence" value="ECO:0007669"/>
    <property type="project" value="UniProtKB-UniRule"/>
</dbReference>
<dbReference type="FunFam" id="2.30.30.790:FF:000001">
    <property type="entry name" value="50S ribosomal protein L19"/>
    <property type="match status" value="1"/>
</dbReference>
<dbReference type="Gene3D" id="2.30.30.790">
    <property type="match status" value="1"/>
</dbReference>
<dbReference type="HAMAP" id="MF_00402">
    <property type="entry name" value="Ribosomal_bL19"/>
    <property type="match status" value="1"/>
</dbReference>
<dbReference type="InterPro" id="IPR001857">
    <property type="entry name" value="Ribosomal_bL19"/>
</dbReference>
<dbReference type="InterPro" id="IPR018257">
    <property type="entry name" value="Ribosomal_bL19_CS"/>
</dbReference>
<dbReference type="InterPro" id="IPR038657">
    <property type="entry name" value="Ribosomal_bL19_sf"/>
</dbReference>
<dbReference type="InterPro" id="IPR008991">
    <property type="entry name" value="Translation_prot_SH3-like_sf"/>
</dbReference>
<dbReference type="NCBIfam" id="TIGR01024">
    <property type="entry name" value="rplS_bact"/>
    <property type="match status" value="1"/>
</dbReference>
<dbReference type="PANTHER" id="PTHR15680:SF9">
    <property type="entry name" value="LARGE RIBOSOMAL SUBUNIT PROTEIN BL19M"/>
    <property type="match status" value="1"/>
</dbReference>
<dbReference type="PANTHER" id="PTHR15680">
    <property type="entry name" value="RIBOSOMAL PROTEIN L19"/>
    <property type="match status" value="1"/>
</dbReference>
<dbReference type="Pfam" id="PF01245">
    <property type="entry name" value="Ribosomal_L19"/>
    <property type="match status" value="1"/>
</dbReference>
<dbReference type="PIRSF" id="PIRSF002191">
    <property type="entry name" value="Ribosomal_L19"/>
    <property type="match status" value="1"/>
</dbReference>
<dbReference type="PRINTS" id="PR00061">
    <property type="entry name" value="RIBOSOMALL19"/>
</dbReference>
<dbReference type="SUPFAM" id="SSF50104">
    <property type="entry name" value="Translation proteins SH3-like domain"/>
    <property type="match status" value="1"/>
</dbReference>
<dbReference type="PROSITE" id="PS01015">
    <property type="entry name" value="RIBOSOMAL_L19"/>
    <property type="match status" value="1"/>
</dbReference>